<organism>
    <name type="scientific">Yersinia enterocolitica serotype O:8 / biotype 1B (strain NCTC 13174 / 8081)</name>
    <dbReference type="NCBI Taxonomy" id="393305"/>
    <lineage>
        <taxon>Bacteria</taxon>
        <taxon>Pseudomonadati</taxon>
        <taxon>Pseudomonadota</taxon>
        <taxon>Gammaproteobacteria</taxon>
        <taxon>Enterobacterales</taxon>
        <taxon>Yersiniaceae</taxon>
        <taxon>Yersinia</taxon>
    </lineage>
</organism>
<keyword id="KW-0028">Amino-acid biosynthesis</keyword>
<keyword id="KW-0963">Cytoplasm</keyword>
<keyword id="KW-0238">DNA-binding</keyword>
<keyword id="KW-0486">Methionine biosynthesis</keyword>
<keyword id="KW-0678">Repressor</keyword>
<keyword id="KW-0804">Transcription</keyword>
<keyword id="KW-0805">Transcription regulation</keyword>
<gene>
    <name evidence="1" type="primary">metJ</name>
    <name type="ordered locus">YE0110</name>
</gene>
<sequence>MAEWNGEYVSPYAEHGKKSEQVKKITVSIPLKVLKILTDERTRRQVNNLRHATNSELLCEAFLHAFTGQPLPNDEDLRKERSDEIPEAAKILMRELGVDPDTWEY</sequence>
<dbReference type="EMBL" id="AM286415">
    <property type="protein sequence ID" value="CAL10252.1"/>
    <property type="molecule type" value="Genomic_DNA"/>
</dbReference>
<dbReference type="RefSeq" id="WP_004392248.1">
    <property type="nucleotide sequence ID" value="NC_008800.1"/>
</dbReference>
<dbReference type="RefSeq" id="YP_001004504.1">
    <property type="nucleotide sequence ID" value="NC_008800.1"/>
</dbReference>
<dbReference type="SMR" id="A1JI14"/>
<dbReference type="GeneID" id="97458248"/>
<dbReference type="KEGG" id="yen:YE0110"/>
<dbReference type="PATRIC" id="fig|393305.7.peg.201"/>
<dbReference type="eggNOG" id="COG3060">
    <property type="taxonomic scope" value="Bacteria"/>
</dbReference>
<dbReference type="HOGENOM" id="CLU_142318_0_0_6"/>
<dbReference type="OrthoDB" id="5680896at2"/>
<dbReference type="Proteomes" id="UP000000642">
    <property type="component" value="Chromosome"/>
</dbReference>
<dbReference type="GO" id="GO:0005737">
    <property type="term" value="C:cytoplasm"/>
    <property type="evidence" value="ECO:0007669"/>
    <property type="project" value="UniProtKB-SubCell"/>
</dbReference>
<dbReference type="GO" id="GO:0003677">
    <property type="term" value="F:DNA binding"/>
    <property type="evidence" value="ECO:0007669"/>
    <property type="project" value="UniProtKB-KW"/>
</dbReference>
<dbReference type="GO" id="GO:0003700">
    <property type="term" value="F:DNA-binding transcription factor activity"/>
    <property type="evidence" value="ECO:0007669"/>
    <property type="project" value="InterPro"/>
</dbReference>
<dbReference type="GO" id="GO:0009086">
    <property type="term" value="P:methionine biosynthetic process"/>
    <property type="evidence" value="ECO:0007669"/>
    <property type="project" value="UniProtKB-UniRule"/>
</dbReference>
<dbReference type="GO" id="GO:0045892">
    <property type="term" value="P:negative regulation of DNA-templated transcription"/>
    <property type="evidence" value="ECO:0007669"/>
    <property type="project" value="UniProtKB-UniRule"/>
</dbReference>
<dbReference type="CDD" id="cd00490">
    <property type="entry name" value="Met_repressor_MetJ"/>
    <property type="match status" value="1"/>
</dbReference>
<dbReference type="FunFam" id="1.10.140.10:FF:000001">
    <property type="entry name" value="Met repressor"/>
    <property type="match status" value="1"/>
</dbReference>
<dbReference type="Gene3D" id="1.10.140.10">
    <property type="entry name" value="MET Apo-Repressor, subunit A"/>
    <property type="match status" value="1"/>
</dbReference>
<dbReference type="HAMAP" id="MF_00744">
    <property type="entry name" value="MetJ"/>
    <property type="match status" value="1"/>
</dbReference>
<dbReference type="InterPro" id="IPR002084">
    <property type="entry name" value="Met_repressor_MetJ"/>
</dbReference>
<dbReference type="InterPro" id="IPR023453">
    <property type="entry name" value="Met_repressor_MetJ_dom_sf"/>
</dbReference>
<dbReference type="InterPro" id="IPR010985">
    <property type="entry name" value="Ribbon_hlx_hlx"/>
</dbReference>
<dbReference type="NCBIfam" id="NF003622">
    <property type="entry name" value="PRK05264.1"/>
    <property type="match status" value="1"/>
</dbReference>
<dbReference type="Pfam" id="PF01340">
    <property type="entry name" value="MetJ"/>
    <property type="match status" value="1"/>
</dbReference>
<dbReference type="SUPFAM" id="SSF47598">
    <property type="entry name" value="Ribbon-helix-helix"/>
    <property type="match status" value="1"/>
</dbReference>
<reference key="1">
    <citation type="journal article" date="2006" name="PLoS Genet.">
        <title>The complete genome sequence and comparative genome analysis of the high pathogenicity Yersinia enterocolitica strain 8081.</title>
        <authorList>
            <person name="Thomson N.R."/>
            <person name="Howard S."/>
            <person name="Wren B.W."/>
            <person name="Holden M.T.G."/>
            <person name="Crossman L."/>
            <person name="Challis G.L."/>
            <person name="Churcher C."/>
            <person name="Mungall K."/>
            <person name="Brooks K."/>
            <person name="Chillingworth T."/>
            <person name="Feltwell T."/>
            <person name="Abdellah Z."/>
            <person name="Hauser H."/>
            <person name="Jagels K."/>
            <person name="Maddison M."/>
            <person name="Moule S."/>
            <person name="Sanders M."/>
            <person name="Whitehead S."/>
            <person name="Quail M.A."/>
            <person name="Dougan G."/>
            <person name="Parkhill J."/>
            <person name="Prentice M.B."/>
        </authorList>
    </citation>
    <scope>NUCLEOTIDE SEQUENCE [LARGE SCALE GENOMIC DNA]</scope>
    <source>
        <strain>NCTC 13174 / 8081</strain>
    </source>
</reference>
<name>METJ_YERE8</name>
<proteinExistence type="inferred from homology"/>
<accession>A1JI14</accession>
<evidence type="ECO:0000255" key="1">
    <source>
        <dbReference type="HAMAP-Rule" id="MF_00744"/>
    </source>
</evidence>
<comment type="function">
    <text evidence="1">This regulatory protein, when combined with SAM (S-adenosylmethionine) represses the expression of the methionine regulon and of enzymes involved in SAM synthesis.</text>
</comment>
<comment type="subunit">
    <text evidence="1">Homodimer.</text>
</comment>
<comment type="subcellular location">
    <subcellularLocation>
        <location evidence="1">Cytoplasm</location>
    </subcellularLocation>
</comment>
<comment type="domain">
    <text>Does not bind DNA by a helix-turn-helix motif.</text>
</comment>
<comment type="similarity">
    <text evidence="1">Belongs to the MetJ family.</text>
</comment>
<feature type="chain" id="PRO_1000046501" description="Met repressor">
    <location>
        <begin position="1"/>
        <end position="105"/>
    </location>
</feature>
<protein>
    <recommendedName>
        <fullName evidence="1">Met repressor</fullName>
    </recommendedName>
    <alternativeName>
        <fullName evidence="1">Met regulon regulatory protein MetJ</fullName>
    </alternativeName>
</protein>